<comment type="subcellular location">
    <subcellularLocation>
        <location>Membrane</location>
    </subcellularLocation>
</comment>
<keyword id="KW-0472">Membrane</keyword>
<keyword id="KW-0677">Repeat</keyword>
<protein>
    <recommendedName>
        <fullName>Membrane antigen containing repeating peptides</fullName>
    </recommendedName>
    <alternativeName>
        <fullName>Clone 20</fullName>
    </alternativeName>
</protein>
<dbReference type="EMBL" id="X06555">
    <property type="protein sequence ID" value="CAA29798.1"/>
    <property type="molecule type" value="Genomic_DNA"/>
</dbReference>
<dbReference type="SMR" id="P14699"/>
<dbReference type="VEuPathDB" id="TriTrypDB:LmjF.16.1460"/>
<dbReference type="VEuPathDB" id="TriTrypDB:LMJFC_160023200"/>
<dbReference type="VEuPathDB" id="TriTrypDB:LMJLV39_160021400"/>
<dbReference type="VEuPathDB" id="TriTrypDB:LMJSD75_160021100"/>
<dbReference type="eggNOG" id="KOG0241">
    <property type="taxonomic scope" value="Eukaryota"/>
</dbReference>
<dbReference type="GO" id="GO:0016020">
    <property type="term" value="C:membrane"/>
    <property type="evidence" value="ECO:0007669"/>
    <property type="project" value="UniProtKB-SubCell"/>
</dbReference>
<name>MAR2_LEIMA</name>
<sequence length="214" mass="23706">QETSAKLADTEETLQETSAKLADTEETLQETSAKLADTEETLQETSAKLADTEETLSAEIASLAEQHGVAQTLCEQQGAYMNQLLTYVRAAYNVTLDGMTEVQATAVADILRQCDYALRSVAQAASDEVEHVKEMYNMVDGNYKETAARFDILRRILGKIDQDVKEASVEIDAPERRQTCSLHPTPRRLGDVSNRENSIENKTRSASRLSGRLF</sequence>
<evidence type="ECO:0000256" key="1">
    <source>
        <dbReference type="SAM" id="MobiDB-lite"/>
    </source>
</evidence>
<feature type="chain" id="PRO_0000096239" description="Membrane antigen containing repeating peptides">
    <location>
        <begin position="1" status="less than"/>
        <end position="214"/>
    </location>
</feature>
<feature type="repeat" description="1">
    <location>
        <begin position="1"/>
        <end position="14"/>
    </location>
</feature>
<feature type="repeat" description="2">
    <location>
        <begin position="15"/>
        <end position="28"/>
    </location>
</feature>
<feature type="repeat" description="3">
    <location>
        <begin position="29"/>
        <end position="42"/>
    </location>
</feature>
<feature type="repeat" description="4">
    <location>
        <begin position="43"/>
        <end position="56"/>
    </location>
</feature>
<feature type="region of interest" description="4 X 14 AA tandem repeats">
    <location>
        <begin position="1"/>
        <end position="56"/>
    </location>
</feature>
<feature type="region of interest" description="Disordered" evidence="1">
    <location>
        <begin position="1"/>
        <end position="31"/>
    </location>
</feature>
<feature type="region of interest" description="Disordered" evidence="1">
    <location>
        <begin position="180"/>
        <end position="214"/>
    </location>
</feature>
<feature type="compositionally biased region" description="Basic and acidic residues" evidence="1">
    <location>
        <begin position="188"/>
        <end position="203"/>
    </location>
</feature>
<feature type="non-terminal residue">
    <location>
        <position position="1"/>
    </location>
</feature>
<proteinExistence type="predicted"/>
<reference key="1">
    <citation type="journal article" date="1987" name="J. Exp. Med.">
        <title>Identification of Leishmania genes encoding proteins containing tandemly repeating peptides.</title>
        <authorList>
            <person name="Wallis A.E."/>
            <person name="McMaster W.R."/>
        </authorList>
    </citation>
    <scope>NUCLEOTIDE SEQUENCE [GENOMIC DNA] OF 1-115</scope>
    <source>
        <strain>NIH S</strain>
    </source>
</reference>
<reference key="2">
    <citation type="submission" date="1989-10" db="EMBL/GenBank/DDBJ databases">
        <authorList>
            <person name="Wallis A.E."/>
        </authorList>
    </citation>
    <scope>NUCLEOTIDE SEQUENCE [GENOMIC DNA]</scope>
</reference>
<accession>P14699</accession>
<organism>
    <name type="scientific">Leishmania major</name>
    <dbReference type="NCBI Taxonomy" id="5664"/>
    <lineage>
        <taxon>Eukaryota</taxon>
        <taxon>Discoba</taxon>
        <taxon>Euglenozoa</taxon>
        <taxon>Kinetoplastea</taxon>
        <taxon>Metakinetoplastina</taxon>
        <taxon>Trypanosomatida</taxon>
        <taxon>Trypanosomatidae</taxon>
        <taxon>Leishmaniinae</taxon>
        <taxon>Leishmania</taxon>
    </lineage>
</organism>